<proteinExistence type="evidence at transcript level"/>
<name>ARM66_HYDVU</name>
<protein>
    <recommendedName>
        <fullName evidence="4">Arminin 45266</fullName>
    </recommendedName>
</protein>
<reference evidence="6" key="1">
    <citation type="journal article" date="2013" name="Proc. Natl. Acad. Sci. U.S.A.">
        <title>Distinct antimicrobial peptide expression determines host species-specific bacterial associations.</title>
        <authorList>
            <person name="Franzenburg S."/>
            <person name="Walter J."/>
            <person name="Kunzel S."/>
            <person name="Wang J."/>
            <person name="Baines J.F."/>
            <person name="Bosch T.C."/>
            <person name="Fraune S."/>
        </authorList>
    </citation>
    <scope>NUCLEOTIDE SEQUENCE [MRNA]</scope>
    <scope>TISSUE SPECIFICITY</scope>
    <source>
        <strain>AEP</strain>
    </source>
</reference>
<dbReference type="EMBL" id="KC701500">
    <property type="protein sequence ID" value="AGN53407.1"/>
    <property type="molecule type" value="mRNA"/>
</dbReference>
<dbReference type="Proteomes" id="UP000694840">
    <property type="component" value="Unplaced"/>
</dbReference>
<dbReference type="GO" id="GO:0005576">
    <property type="term" value="C:extracellular region"/>
    <property type="evidence" value="ECO:0007669"/>
    <property type="project" value="UniProtKB-SubCell"/>
</dbReference>
<keyword id="KW-0027">Amidation</keyword>
<keyword id="KW-0044">Antibiotic</keyword>
<keyword id="KW-0929">Antimicrobial</keyword>
<keyword id="KW-0391">Immunity</keyword>
<keyword id="KW-0399">Innate immunity</keyword>
<keyword id="KW-0472">Membrane</keyword>
<keyword id="KW-1185">Reference proteome</keyword>
<keyword id="KW-0964">Secreted</keyword>
<keyword id="KW-0732">Signal</keyword>
<keyword id="KW-1052">Target cell membrane</keyword>
<keyword id="KW-1053">Target membrane</keyword>
<accession>R9UC04</accession>
<organism>
    <name type="scientific">Hydra vulgaris</name>
    <name type="common">Hydra</name>
    <name type="synonym">Hydra attenuata</name>
    <dbReference type="NCBI Taxonomy" id="6087"/>
    <lineage>
        <taxon>Eukaryota</taxon>
        <taxon>Metazoa</taxon>
        <taxon>Cnidaria</taxon>
        <taxon>Hydrozoa</taxon>
        <taxon>Hydroidolina</taxon>
        <taxon>Anthoathecata</taxon>
        <taxon>Aplanulata</taxon>
        <taxon>Hydridae</taxon>
        <taxon>Hydra</taxon>
    </lineage>
</organism>
<feature type="signal peptide" evidence="2">
    <location>
        <begin position="1"/>
        <end position="20"/>
    </location>
</feature>
<feature type="propeptide" id="PRO_0000461980" evidence="1">
    <location>
        <begin position="21"/>
        <end position="59"/>
    </location>
</feature>
<feature type="peptide" id="PRO_5004480697" description="Arminin 45266" evidence="1">
    <location>
        <begin position="60"/>
        <end position="87"/>
    </location>
</feature>
<feature type="modified residue" description="Threonine amide" evidence="1">
    <location>
        <position position="87"/>
    </location>
</feature>
<sequence>MKSASLILFVALVALTYARSYEDVKEEIKNEVEKEILDDLEEENDELDDNTQEVNDPRARRWRRIVRRIRVRPLLPYIPCIIQAYQTGKK</sequence>
<evidence type="ECO:0000250" key="1">
    <source>
        <dbReference type="UniProtKB" id="D2XUU4"/>
    </source>
</evidence>
<evidence type="ECO:0000255" key="2"/>
<evidence type="ECO:0000269" key="3">
    <source>
    </source>
</evidence>
<evidence type="ECO:0000303" key="4">
    <source>
    </source>
</evidence>
<evidence type="ECO:0000305" key="5"/>
<evidence type="ECO:0000312" key="6">
    <source>
        <dbReference type="EMBL" id="AGN53407.1"/>
    </source>
</evidence>
<comment type="function">
    <text evidence="1">Antimicrobial peptide with a broad-spectrum antimicrobial activity. Keeps its antibacterial activity under a wide range of salt concentrations that mimic physiological conditions of human blood, which is surprising, since Hydra is an obligate freshwater animal with nearly no salt tolerance. Does not affect red blood cells.</text>
</comment>
<comment type="subcellular location">
    <subcellularLocation>
        <location evidence="1">Secreted</location>
    </subcellularLocation>
    <subcellularLocation>
        <location evidence="1">Target cell membrane</location>
    </subcellularLocation>
</comment>
<comment type="tissue specificity">
    <text evidence="3">Expressed in entodermal epithelium along the body column.</text>
</comment>
<comment type="similarity">
    <text evidence="5">Belongs to the arminin family.</text>
</comment>